<protein>
    <recommendedName>
        <fullName evidence="1">Negative modulator of initiation of replication</fullName>
    </recommendedName>
</protein>
<organism>
    <name type="scientific">Pseudoalteromonas translucida (strain TAC 125)</name>
    <dbReference type="NCBI Taxonomy" id="326442"/>
    <lineage>
        <taxon>Bacteria</taxon>
        <taxon>Pseudomonadati</taxon>
        <taxon>Pseudomonadota</taxon>
        <taxon>Gammaproteobacteria</taxon>
        <taxon>Alteromonadales</taxon>
        <taxon>Pseudoalteromonadaceae</taxon>
        <taxon>Pseudoalteromonas</taxon>
    </lineage>
</organism>
<sequence>MKQIDIDDELYQYIASNTQSIGESASTILRRLLNLSGEKIQTANVELNQNNQTTTTLPKVPPVAEQTPALAAKPSAVAEKSVQQKNANVFNVLNKEELAMQKGVVGRFLFILSAFYRTHKTDFRAVLDIKGRDRVYFATSKEDLVNSGSSMNPKNITDSEYWVMTNSNTTRKKMMLHEVALCLGYSTEQAEKIRDYL</sequence>
<evidence type="ECO:0000255" key="1">
    <source>
        <dbReference type="HAMAP-Rule" id="MF_00908"/>
    </source>
</evidence>
<name>SEQA_PSET1</name>
<keyword id="KW-0963">Cytoplasm</keyword>
<keyword id="KW-0236">DNA replication inhibitor</keyword>
<keyword id="KW-0238">DNA-binding</keyword>
<keyword id="KW-1185">Reference proteome</keyword>
<gene>
    <name evidence="1" type="primary">seqA</name>
    <name type="ordered locus">PSHAa1635</name>
</gene>
<feature type="chain" id="PRO_0000413932" description="Negative modulator of initiation of replication">
    <location>
        <begin position="1"/>
        <end position="197"/>
    </location>
</feature>
<proteinExistence type="inferred from homology"/>
<comment type="function">
    <text evidence="1">Negative regulator of replication initiation, which contributes to regulation of DNA replication and ensures that replication initiation occurs exactly once per chromosome per cell cycle. Binds to pairs of hemimethylated GATC sequences in the oriC region, thus preventing assembly of replication proteins and re-initiation at newly replicated origins. Repression is relieved when the region becomes fully methylated.</text>
</comment>
<comment type="subunit">
    <text evidence="1">Homodimer. Polymerizes to form helical filaments.</text>
</comment>
<comment type="subcellular location">
    <subcellularLocation>
        <location evidence="1">Cytoplasm</location>
    </subcellularLocation>
</comment>
<comment type="similarity">
    <text evidence="1">Belongs to the SeqA family.</text>
</comment>
<accession>Q3IGV1</accession>
<reference key="1">
    <citation type="journal article" date="2005" name="Genome Res.">
        <title>Coping with cold: the genome of the versatile marine Antarctica bacterium Pseudoalteromonas haloplanktis TAC125.</title>
        <authorList>
            <person name="Medigue C."/>
            <person name="Krin E."/>
            <person name="Pascal G."/>
            <person name="Barbe V."/>
            <person name="Bernsel A."/>
            <person name="Bertin P.N."/>
            <person name="Cheung F."/>
            <person name="Cruveiller S."/>
            <person name="D'Amico S."/>
            <person name="Duilio A."/>
            <person name="Fang G."/>
            <person name="Feller G."/>
            <person name="Ho C."/>
            <person name="Mangenot S."/>
            <person name="Marino G."/>
            <person name="Nilsson J."/>
            <person name="Parrilli E."/>
            <person name="Rocha E.P.C."/>
            <person name="Rouy Z."/>
            <person name="Sekowska A."/>
            <person name="Tutino M.L."/>
            <person name="Vallenet D."/>
            <person name="von Heijne G."/>
            <person name="Danchin A."/>
        </authorList>
    </citation>
    <scope>NUCLEOTIDE SEQUENCE [LARGE SCALE GENOMIC DNA]</scope>
    <source>
        <strain>TAC 125</strain>
    </source>
</reference>
<dbReference type="EMBL" id="CR954246">
    <property type="protein sequence ID" value="CAI86708.1"/>
    <property type="molecule type" value="Genomic_DNA"/>
</dbReference>
<dbReference type="SMR" id="Q3IGV1"/>
<dbReference type="STRING" id="326442.PSHAa1635"/>
<dbReference type="KEGG" id="pha:PSHAa1635"/>
<dbReference type="PATRIC" id="fig|326442.8.peg.1582"/>
<dbReference type="eggNOG" id="COG3057">
    <property type="taxonomic scope" value="Bacteria"/>
</dbReference>
<dbReference type="HOGENOM" id="CLU_099733_0_0_6"/>
<dbReference type="BioCyc" id="PHAL326442:PSHA_RS08020-MONOMER"/>
<dbReference type="Proteomes" id="UP000006843">
    <property type="component" value="Chromosome I"/>
</dbReference>
<dbReference type="GO" id="GO:0005737">
    <property type="term" value="C:cytoplasm"/>
    <property type="evidence" value="ECO:0007669"/>
    <property type="project" value="UniProtKB-SubCell"/>
</dbReference>
<dbReference type="GO" id="GO:0003677">
    <property type="term" value="F:DNA binding"/>
    <property type="evidence" value="ECO:0007669"/>
    <property type="project" value="UniProtKB-UniRule"/>
</dbReference>
<dbReference type="GO" id="GO:0032297">
    <property type="term" value="P:negative regulation of DNA-templated DNA replication initiation"/>
    <property type="evidence" value="ECO:0007669"/>
    <property type="project" value="UniProtKB-UniRule"/>
</dbReference>
<dbReference type="GO" id="GO:0006355">
    <property type="term" value="P:regulation of DNA-templated transcription"/>
    <property type="evidence" value="ECO:0007669"/>
    <property type="project" value="InterPro"/>
</dbReference>
<dbReference type="Gene3D" id="1.10.1220.10">
    <property type="entry name" value="Met repressor-like"/>
    <property type="match status" value="1"/>
</dbReference>
<dbReference type="Gene3D" id="1.20.1380.10">
    <property type="entry name" value="Replication modulator SeqA, C-terminal DNA-binding domain"/>
    <property type="match status" value="1"/>
</dbReference>
<dbReference type="HAMAP" id="MF_00908">
    <property type="entry name" value="SeqA"/>
    <property type="match status" value="1"/>
</dbReference>
<dbReference type="InterPro" id="IPR013321">
    <property type="entry name" value="Arc_rbn_hlx_hlx"/>
</dbReference>
<dbReference type="InterPro" id="IPR010985">
    <property type="entry name" value="Ribbon_hlx_hlx"/>
</dbReference>
<dbReference type="InterPro" id="IPR005621">
    <property type="entry name" value="SeqA"/>
</dbReference>
<dbReference type="InterPro" id="IPR026577">
    <property type="entry name" value="SeqA_DNA-bd_C"/>
</dbReference>
<dbReference type="InterPro" id="IPR036835">
    <property type="entry name" value="SeqA_DNA-bd_C_sf"/>
</dbReference>
<dbReference type="InterPro" id="IPR033761">
    <property type="entry name" value="SeqA_N"/>
</dbReference>
<dbReference type="NCBIfam" id="NF008389">
    <property type="entry name" value="PRK11187.1"/>
    <property type="match status" value="1"/>
</dbReference>
<dbReference type="Pfam" id="PF03925">
    <property type="entry name" value="SeqA"/>
    <property type="match status" value="1"/>
</dbReference>
<dbReference type="Pfam" id="PF17206">
    <property type="entry name" value="SeqA_N"/>
    <property type="match status" value="1"/>
</dbReference>
<dbReference type="PIRSF" id="PIRSF019401">
    <property type="entry name" value="SeqA"/>
    <property type="match status" value="1"/>
</dbReference>
<dbReference type="SUPFAM" id="SSF82808">
    <property type="entry name" value="Replication modulator SeqA, C-terminal DNA-binding domain"/>
    <property type="match status" value="1"/>
</dbReference>
<dbReference type="SUPFAM" id="SSF47598">
    <property type="entry name" value="Ribbon-helix-helix"/>
    <property type="match status" value="1"/>
</dbReference>